<dbReference type="EMBL" id="CR857059">
    <property type="protein sequence ID" value="CAH89366.1"/>
    <property type="molecule type" value="mRNA"/>
</dbReference>
<dbReference type="EMBL" id="CR858165">
    <property type="protein sequence ID" value="CAH90404.1"/>
    <property type="molecule type" value="mRNA"/>
</dbReference>
<dbReference type="RefSeq" id="NP_001125200.1">
    <property type="nucleotide sequence ID" value="NM_001131728.1"/>
</dbReference>
<dbReference type="RefSeq" id="NP_001191291.1">
    <property type="nucleotide sequence ID" value="NM_001204362.1"/>
</dbReference>
<dbReference type="FunCoup" id="Q5RCV3">
    <property type="interactions" value="2730"/>
</dbReference>
<dbReference type="STRING" id="9601.ENSPPYP00000021011"/>
<dbReference type="GeneID" id="100172091"/>
<dbReference type="KEGG" id="pon:100172091"/>
<dbReference type="CTD" id="4683"/>
<dbReference type="eggNOG" id="ENOG502QQ7Y">
    <property type="taxonomic scope" value="Eukaryota"/>
</dbReference>
<dbReference type="InParanoid" id="Q5RCV3"/>
<dbReference type="OrthoDB" id="552194at2759"/>
<dbReference type="Proteomes" id="UP000001595">
    <property type="component" value="Unplaced"/>
</dbReference>
<dbReference type="GO" id="GO:0000781">
    <property type="term" value="C:chromosome, telomeric region"/>
    <property type="evidence" value="ECO:0000250"/>
    <property type="project" value="UniProtKB"/>
</dbReference>
<dbReference type="GO" id="GO:0030870">
    <property type="term" value="C:Mre11 complex"/>
    <property type="evidence" value="ECO:0000250"/>
    <property type="project" value="UniProtKB"/>
</dbReference>
<dbReference type="GO" id="GO:0042405">
    <property type="term" value="C:nuclear inclusion body"/>
    <property type="evidence" value="ECO:0000250"/>
    <property type="project" value="UniProtKB"/>
</dbReference>
<dbReference type="GO" id="GO:0016605">
    <property type="term" value="C:PML body"/>
    <property type="evidence" value="ECO:0007669"/>
    <property type="project" value="UniProtKB-SubCell"/>
</dbReference>
<dbReference type="GO" id="GO:0035861">
    <property type="term" value="C:site of double-strand break"/>
    <property type="evidence" value="ECO:0000250"/>
    <property type="project" value="UniProtKB"/>
</dbReference>
<dbReference type="GO" id="GO:0140463">
    <property type="term" value="F:chromatin-protein adaptor activity"/>
    <property type="evidence" value="ECO:0000250"/>
    <property type="project" value="UniProtKB"/>
</dbReference>
<dbReference type="GO" id="GO:0003684">
    <property type="term" value="F:damaged DNA binding"/>
    <property type="evidence" value="ECO:0007669"/>
    <property type="project" value="TreeGrafter"/>
</dbReference>
<dbReference type="GO" id="GO:0140297">
    <property type="term" value="F:DNA-binding transcription factor binding"/>
    <property type="evidence" value="ECO:0000250"/>
    <property type="project" value="UniProtKB"/>
</dbReference>
<dbReference type="GO" id="GO:0140031">
    <property type="term" value="F:phosphorylation-dependent protein binding"/>
    <property type="evidence" value="ECO:0000250"/>
    <property type="project" value="UniProtKB"/>
</dbReference>
<dbReference type="GO" id="GO:0043539">
    <property type="term" value="F:protein serine/threonine kinase activator activity"/>
    <property type="evidence" value="ECO:0000250"/>
    <property type="project" value="UniProtKB"/>
</dbReference>
<dbReference type="GO" id="GO:0001832">
    <property type="term" value="P:blastocyst growth"/>
    <property type="evidence" value="ECO:0000250"/>
    <property type="project" value="UniProtKB"/>
</dbReference>
<dbReference type="GO" id="GO:0000729">
    <property type="term" value="P:DNA double-strand break processing"/>
    <property type="evidence" value="ECO:0000250"/>
    <property type="project" value="UniProtKB"/>
</dbReference>
<dbReference type="GO" id="GO:0006302">
    <property type="term" value="P:double-strand break repair"/>
    <property type="evidence" value="ECO:0000250"/>
    <property type="project" value="UniProtKB"/>
</dbReference>
<dbReference type="GO" id="GO:0000724">
    <property type="term" value="P:double-strand break repair via homologous recombination"/>
    <property type="evidence" value="ECO:0007669"/>
    <property type="project" value="TreeGrafter"/>
</dbReference>
<dbReference type="GO" id="GO:0001701">
    <property type="term" value="P:in utero embryonic development"/>
    <property type="evidence" value="ECO:0000250"/>
    <property type="project" value="UniProtKB"/>
</dbReference>
<dbReference type="GO" id="GO:0045190">
    <property type="term" value="P:isotype switching"/>
    <property type="evidence" value="ECO:0000250"/>
    <property type="project" value="UniProtKB"/>
</dbReference>
<dbReference type="GO" id="GO:0051321">
    <property type="term" value="P:meiotic cell cycle"/>
    <property type="evidence" value="ECO:0007669"/>
    <property type="project" value="UniProtKB-KW"/>
</dbReference>
<dbReference type="GO" id="GO:0007095">
    <property type="term" value="P:mitotic G2 DNA damage checkpoint signaling"/>
    <property type="evidence" value="ECO:0000250"/>
    <property type="project" value="UniProtKB"/>
</dbReference>
<dbReference type="GO" id="GO:0031848">
    <property type="term" value="P:protection from non-homologous end joining at telomere"/>
    <property type="evidence" value="ECO:0000250"/>
    <property type="project" value="UniProtKB"/>
</dbReference>
<dbReference type="GO" id="GO:1990166">
    <property type="term" value="P:protein localization to site of double-strand break"/>
    <property type="evidence" value="ECO:0000250"/>
    <property type="project" value="UniProtKB"/>
</dbReference>
<dbReference type="GO" id="GO:0062176">
    <property type="term" value="P:R-loop processing"/>
    <property type="evidence" value="ECO:0000250"/>
    <property type="project" value="UniProtKB"/>
</dbReference>
<dbReference type="GO" id="GO:0048145">
    <property type="term" value="P:regulation of fibroblast proliferation"/>
    <property type="evidence" value="ECO:0000250"/>
    <property type="project" value="UniProtKB"/>
</dbReference>
<dbReference type="GO" id="GO:0000723">
    <property type="term" value="P:telomere maintenance"/>
    <property type="evidence" value="ECO:0000250"/>
    <property type="project" value="UniProtKB"/>
</dbReference>
<dbReference type="GO" id="GO:0043247">
    <property type="term" value="P:telomere maintenance in response to DNA damage"/>
    <property type="evidence" value="ECO:0000250"/>
    <property type="project" value="UniProtKB"/>
</dbReference>
<dbReference type="CDD" id="cd17741">
    <property type="entry name" value="BRCT_nibrin"/>
    <property type="match status" value="1"/>
</dbReference>
<dbReference type="CDD" id="cd22667">
    <property type="entry name" value="FHA_NBN"/>
    <property type="match status" value="1"/>
</dbReference>
<dbReference type="FunFam" id="2.60.200.20:FF:000017">
    <property type="entry name" value="Nibrin"/>
    <property type="match status" value="1"/>
</dbReference>
<dbReference type="FunFam" id="3.40.50.10190:FF:000024">
    <property type="entry name" value="Nibrin"/>
    <property type="match status" value="1"/>
</dbReference>
<dbReference type="FunFam" id="3.40.50.10980:FF:000001">
    <property type="entry name" value="Nibrin"/>
    <property type="match status" value="1"/>
</dbReference>
<dbReference type="Gene3D" id="2.60.200.20">
    <property type="match status" value="1"/>
</dbReference>
<dbReference type="Gene3D" id="3.40.50.10190">
    <property type="entry name" value="BRCT domain"/>
    <property type="match status" value="1"/>
</dbReference>
<dbReference type="Gene3D" id="3.40.50.10980">
    <property type="entry name" value="Nibrin, BRCT2 domain"/>
    <property type="match status" value="1"/>
</dbReference>
<dbReference type="InterPro" id="IPR001357">
    <property type="entry name" value="BRCT_dom"/>
</dbReference>
<dbReference type="InterPro" id="IPR036420">
    <property type="entry name" value="BRCT_dom_sf"/>
</dbReference>
<dbReference type="InterPro" id="IPR000253">
    <property type="entry name" value="FHA_dom"/>
</dbReference>
<dbReference type="InterPro" id="IPR040227">
    <property type="entry name" value="Nibrin-rel"/>
</dbReference>
<dbReference type="InterPro" id="IPR032429">
    <property type="entry name" value="Nibrin_BRCT2"/>
</dbReference>
<dbReference type="InterPro" id="IPR043014">
    <property type="entry name" value="Nibrin_BRCT2_sf"/>
</dbReference>
<dbReference type="InterPro" id="IPR013908">
    <property type="entry name" value="Nibrin_C"/>
</dbReference>
<dbReference type="InterPro" id="IPR016592">
    <property type="entry name" value="Nibrin_met"/>
</dbReference>
<dbReference type="InterPro" id="IPR008984">
    <property type="entry name" value="SMAD_FHA_dom_sf"/>
</dbReference>
<dbReference type="PANTHER" id="PTHR12162:SF0">
    <property type="entry name" value="NIBRIN"/>
    <property type="match status" value="1"/>
</dbReference>
<dbReference type="PANTHER" id="PTHR12162">
    <property type="entry name" value="NIBRIN-RELATED"/>
    <property type="match status" value="1"/>
</dbReference>
<dbReference type="Pfam" id="PF00533">
    <property type="entry name" value="BRCT"/>
    <property type="match status" value="1"/>
</dbReference>
<dbReference type="Pfam" id="PF00498">
    <property type="entry name" value="FHA"/>
    <property type="match status" value="1"/>
</dbReference>
<dbReference type="Pfam" id="PF08599">
    <property type="entry name" value="Nbs1_C"/>
    <property type="match status" value="1"/>
</dbReference>
<dbReference type="Pfam" id="PF16508">
    <property type="entry name" value="NIBRIN_BRCT_II"/>
    <property type="match status" value="1"/>
</dbReference>
<dbReference type="PIRSF" id="PIRSF011869">
    <property type="entry name" value="Nibrin_animal"/>
    <property type="match status" value="1"/>
</dbReference>
<dbReference type="SMART" id="SM00240">
    <property type="entry name" value="FHA"/>
    <property type="match status" value="1"/>
</dbReference>
<dbReference type="SMART" id="SM01348">
    <property type="entry name" value="Nbs1_C"/>
    <property type="match status" value="1"/>
</dbReference>
<dbReference type="SUPFAM" id="SSF52113">
    <property type="entry name" value="BRCT domain"/>
    <property type="match status" value="1"/>
</dbReference>
<dbReference type="SUPFAM" id="SSF49879">
    <property type="entry name" value="SMAD/FHA domain"/>
    <property type="match status" value="1"/>
</dbReference>
<dbReference type="PROSITE" id="PS50006">
    <property type="entry name" value="FHA_DOMAIN"/>
    <property type="match status" value="1"/>
</dbReference>
<reference key="1">
    <citation type="submission" date="2004-11" db="EMBL/GenBank/DDBJ databases">
        <authorList>
            <consortium name="The German cDNA consortium"/>
        </authorList>
    </citation>
    <scope>NUCLEOTIDE SEQUENCE [LARGE SCALE MRNA]</scope>
    <source>
        <tissue>Kidney</tissue>
    </source>
</reference>
<accession>Q5RCV3</accession>
<accession>Q5RFU1</accession>
<evidence type="ECO:0000250" key="1">
    <source>
        <dbReference type="UniProtKB" id="O60934"/>
    </source>
</evidence>
<evidence type="ECO:0000250" key="2">
    <source>
        <dbReference type="UniProtKB" id="Q9R207"/>
    </source>
</evidence>
<evidence type="ECO:0000255" key="3"/>
<evidence type="ECO:0000255" key="4">
    <source>
        <dbReference type="PROSITE-ProRule" id="PRU00086"/>
    </source>
</evidence>
<evidence type="ECO:0000256" key="5">
    <source>
        <dbReference type="SAM" id="MobiDB-lite"/>
    </source>
</evidence>
<evidence type="ECO:0000305" key="6"/>
<keyword id="KW-0131">Cell cycle</keyword>
<keyword id="KW-0158">Chromosome</keyword>
<keyword id="KW-0227">DNA damage</keyword>
<keyword id="KW-0234">DNA repair</keyword>
<keyword id="KW-1017">Isopeptide bond</keyword>
<keyword id="KW-0469">Meiosis</keyword>
<keyword id="KW-0539">Nucleus</keyword>
<keyword id="KW-0597">Phosphoprotein</keyword>
<keyword id="KW-1185">Reference proteome</keyword>
<keyword id="KW-0779">Telomere</keyword>
<keyword id="KW-0832">Ubl conjugation</keyword>
<protein>
    <recommendedName>
        <fullName>Nibrin</fullName>
    </recommendedName>
    <alternativeName>
        <fullName>Nijmegen breakage syndrome protein 1 homolog</fullName>
    </alternativeName>
</protein>
<feature type="chain" id="PRO_0000231045" description="Nibrin">
    <location>
        <begin position="1"/>
        <end position="754"/>
    </location>
</feature>
<feature type="domain" description="FHA" evidence="4">
    <location>
        <begin position="24"/>
        <end position="83"/>
    </location>
</feature>
<feature type="domain" description="BRCT 1" evidence="3">
    <location>
        <begin position="105"/>
        <end position="181"/>
    </location>
</feature>
<feature type="domain" description="BRCT 2" evidence="1">
    <location>
        <begin position="224"/>
        <end position="315"/>
    </location>
</feature>
<feature type="region of interest" description="Mediates interaction with SP100" evidence="2">
    <location>
        <begin position="111"/>
        <end position="328"/>
    </location>
</feature>
<feature type="region of interest" description="Interaction with MTOR, MAPKAP1 and RICTOR" evidence="1">
    <location>
        <begin position="221"/>
        <end position="402"/>
    </location>
</feature>
<feature type="region of interest" description="Disordered" evidence="5">
    <location>
        <begin position="326"/>
        <end position="346"/>
    </location>
</feature>
<feature type="region of interest" description="Disordered" evidence="5">
    <location>
        <begin position="396"/>
        <end position="415"/>
    </location>
</feature>
<feature type="region of interest" description="Disordered" evidence="5">
    <location>
        <begin position="431"/>
        <end position="475"/>
    </location>
</feature>
<feature type="short sequence motif" description="Nuclear localization signal" evidence="1">
    <location>
        <begin position="461"/>
        <end position="467"/>
    </location>
</feature>
<feature type="short sequence motif" description="FxF/Y motif" evidence="1">
    <location>
        <begin position="740"/>
        <end position="749"/>
    </location>
</feature>
<feature type="compositionally biased region" description="Polar residues" evidence="5">
    <location>
        <begin position="328"/>
        <end position="346"/>
    </location>
</feature>
<feature type="compositionally biased region" description="Polar residues" evidence="5">
    <location>
        <begin position="431"/>
        <end position="440"/>
    </location>
</feature>
<feature type="compositionally biased region" description="Polar residues" evidence="5">
    <location>
        <begin position="447"/>
        <end position="462"/>
    </location>
</feature>
<feature type="modified residue" description="Phosphoserine; by ATM" evidence="1">
    <location>
        <position position="278"/>
    </location>
</feature>
<feature type="modified residue" description="Phosphothreonine" evidence="1">
    <location>
        <position position="337"/>
    </location>
</feature>
<feature type="modified residue" description="Phosphoserine; by ATM" evidence="1">
    <location>
        <position position="343"/>
    </location>
</feature>
<feature type="modified residue" description="Phosphoserine" evidence="1">
    <location>
        <position position="347"/>
    </location>
</feature>
<feature type="modified residue" description="N6-lactoyllysine" evidence="1">
    <location>
        <position position="388"/>
    </location>
</feature>
<feature type="modified residue" description="Phosphoserine" evidence="1">
    <location>
        <position position="397"/>
    </location>
</feature>
<feature type="modified residue" description="Phosphothreonine" evidence="1">
    <location>
        <position position="402"/>
    </location>
</feature>
<feature type="modified residue" description="Phosphoserine" evidence="1">
    <location>
        <position position="432"/>
    </location>
</feature>
<feature type="modified residue" description="Phosphoserine" evidence="1">
    <location>
        <position position="509"/>
    </location>
</feature>
<feature type="modified residue" description="Phosphoserine" evidence="1">
    <location>
        <position position="518"/>
    </location>
</feature>
<feature type="modified residue" description="Phosphoserine" evidence="1">
    <location>
        <position position="615"/>
    </location>
</feature>
<feature type="modified residue" description="Phosphoserine" evidence="1">
    <location>
        <position position="673"/>
    </location>
</feature>
<feature type="cross-link" description="Glycyl lysine isopeptide (Lys-Gly) (interchain with G-Cter in ubiquitin)" evidence="1">
    <location>
        <position position="435"/>
    </location>
</feature>
<feature type="cross-link" description="Glycyl lysine isopeptide (Lys-Gly) (interchain with G-Cter in SUMO2)" evidence="1">
    <location>
        <position position="571"/>
    </location>
</feature>
<feature type="cross-link" description="Glycyl lysine isopeptide (Lys-Gly) (interchain with G-Cter in SUMO2)" evidence="1">
    <location>
        <position position="582"/>
    </location>
</feature>
<feature type="cross-link" description="Glycyl lysine isopeptide (Lys-Gly) (interchain with G-Cter in ubiquitin)" evidence="1">
    <location>
        <position position="686"/>
    </location>
</feature>
<feature type="cross-link" description="Glycyl lysine isopeptide (Lys-Gly) (interchain with G-Cter in ubiquitin)" evidence="1">
    <location>
        <position position="690"/>
    </location>
</feature>
<feature type="cross-link" description="Glycyl lysine isopeptide (Lys-Gly) (interchain with G-Cter in ubiquitin)" evidence="1">
    <location>
        <position position="735"/>
    </location>
</feature>
<feature type="sequence conflict" description="In Ref. 1; CAH90404." evidence="6" ref="1">
    <original>A</original>
    <variation>P</variation>
    <location>
        <position position="164"/>
    </location>
</feature>
<feature type="sequence conflict" description="In Ref. 1; CAH89366." evidence="6" ref="1">
    <original>K</original>
    <variation>R</variation>
    <location>
        <position position="225"/>
    </location>
</feature>
<feature type="sequence conflict" description="In Ref. 1; CAH90404." evidence="6" ref="1">
    <original>E</original>
    <variation>K</variation>
    <location>
        <position position="390"/>
    </location>
</feature>
<feature type="sequence conflict" description="In Ref. 1; CAH89366." evidence="6" ref="1">
    <original>Q</original>
    <variation>R</variation>
    <location>
        <position position="398"/>
    </location>
</feature>
<feature type="sequence conflict" description="In Ref. 1; CAH90404." evidence="6" ref="1">
    <original>S</original>
    <variation>P</variation>
    <location>
        <position position="406"/>
    </location>
</feature>
<feature type="sequence conflict" description="In Ref. 1; CAH89366." evidence="6" ref="1">
    <location>
        <position position="485"/>
    </location>
</feature>
<feature type="sequence conflict" description="In Ref. 1; CAH90404." evidence="6" ref="1">
    <original>D</original>
    <variation>G</variation>
    <location>
        <position position="519"/>
    </location>
</feature>
<sequence length="754" mass="85121">MWKLLPAAGPAGGEPYRLLTGVEYVVGRKNCAILIEKDQSISRNHAVLTANFSVTNLSQTDEIPVLALKDNSKYGTFVNEEKMQNGFSRTLKSGDSITFGVFESKFRIEYEPLVACSSCLDVSGKTALNQAILQLGGFTVNNWTEECTHLVMVSVKVTIKTICALICGRPIVKPEYFTEFLKAVQSKKQLPQIESFYPPLDEPSIGSKNVDLSGRQERKQIFKGKTFIFLNAKQHKKLSSAVVFGGGEARLITEENEEEHNFFLAPGTCVVDTGITNSQTLIPDCQKKWIQSIMDMLQRQGLRPIPEAEIGLAVIFMTTKNYCDPQGHPSTGLKTTTPGPSLSQGLSVDEKLMPSAPVNTTTYVADTESEQADTWDLSERPKEIKVSKMEQKFRMLSQDAPTVKESCKTSSNNNSMVSNTLAKMRIPNYQLSPTKLPSINKSKDRASQQQQTNSIRNYFQPSTKKRERDEENQEMSSCKSARIEMSCSLLEQTQPAIPLLWKNKEQHLSENEPVDTNSDNNLFTDTDLISTVKNSASKSHAAEKLRSNKKREMHDVTIEDEVLEQLLKDTKPELEIEVKVQKQEEDVNIRKRPRMDVETNDTFSDKAVPESSKISQENEIGKKHELKEESLWSTKEISNNDKLQDHSEMLPKKLLLTEFRSLVIKNSTSRNPSGINGDYGLLKNFKKFKKVTYPGAGKLPHIIGGSDLIAHHARKNTELEEWLRQEMEVQNQHAKEESLADDLFRYNPYLKRRR</sequence>
<proteinExistence type="evidence at transcript level"/>
<comment type="function">
    <text evidence="1">Component of the MRN complex, which plays a central role in double-strand break (DSB) repair, DNA recombination, maintenance of telomere integrity and meiosis. The MRN complex is involved in the repair of DNA double-strand breaks (DSBs) via homologous recombination (HR), an error-free mechanism which primarily occurs during S and G2 phases. The complex (1) mediates the end resection of damaged DNA, which generates proper single-stranded DNA, a key initial steps in HR, and is (2) required for the recruitment of other repair factors and efficient activation of ATM and ATR upon DNA damage. The MRN complex possesses single-strand endonuclease activity and double-strand-specific 3'-5' exonuclease activity, which are provided by MRE11, to initiate end resection, which is required for single-strand invasion and recombination. Within the MRN complex, NBN acts as a protein-protein adapter, which specifically recognizes and binds phosphorylated proteins, promoting their recruitment to DNA damage sites. Recruits MRE11 and RAD50 components of the MRN complex to DSBs in response to DNA damage. Promotes the recruitment of PI3/PI4-kinase family members ATM, ATR, and probably DNA-PKcs to the DNA damage sites, activating their functions. Mediates the recruitment of phosphorylated RBBP8/CtIP to DSBs, leading to cooperation between the MRN complex and RBBP8/CtIP to initiate end resection. RBBP8/CtIP specifically promotes the endonuclease activity of the MRN complex to clear DNA ends containing protein adducts. The MRN complex is also required for the processing of R-loops. NBN also functions in telomere length maintenance via its interaction with TERF2: interaction with TERF2 during G1 phase preventing recruitment of DCLRE1B/Apollo to telomeres. NBN also promotes DNA repair choice at dysfunctional telomeres: NBN phosphorylation by CK2 promotes non-homologous end joining repair at telomeres, while unphosphorylated NBN promotes microhomology-mediated end-joining (MMEJ) repair. Enhances AKT1 phosphorylation possibly by association with the mTORC2 complex.</text>
</comment>
<comment type="subunit">
    <text evidence="1 2">Component of the MRN complex composed of two heterodimers RAD50 and MRE11 associated with a single NBN. The MRN complexes dimerize on DNA to form joined MRN-MRN oligomers required for DNA double-strand break repair. The MRN complexes dimerize on DNA to form joined MRN-MRN oligomers required for DNA double-strand break repair. As part of the MRN complex, interacts with MCM9; the interaction recruits the complex to DNA repair sites. Component of the BASC complex, at least composed of BRCA1, MSH2, MSH6, MLH1, ATM, BLM, RAD50, MRE11 and NBN. Interacts with histone H2AX; this requires phosphorylation of H2AX on 'Ser-139' and promotes NBN recruitment to DNA damage sites. Interacts with (phosphorylated) MDC1; promoting NBN recruitment to DNA damage sites. Interacts with (phosphorylated) RAD17; promoting NBN recruitment to DNA damage sites. Interacts (via FxF/Y motif) with ATM. Interacts with HJURP. Interacts with INTS3. Interacts with KPNA2. Interacts with TERF2; interaction is disrupted upon NBN phosphorylation by CDK2. Interacts with (phosphorylated) RBBP8/CtIP; the interaction links the role of the MRN complex in DNA double-strand break sensing to resection. Interacts with SP100; recruits NBN to PML bodies. Interacts with ATF2. Interacts with MTOR, MAPKAP1 isoform 2 and RICTOR; indicative for an association with the mTORC2 complex. Interacts with MRNIP. Interacts with UFL1; promoting UFL1 recruitment to double-strand breaks following DNA damage (By similarity). Interacts with CYREN (via XLF motif) (By similarity).</text>
</comment>
<comment type="subcellular location">
    <subcellularLocation>
        <location evidence="1">Nucleus</location>
    </subcellularLocation>
    <subcellularLocation>
        <location evidence="1">Chromosome</location>
    </subcellularLocation>
    <subcellularLocation>
        <location evidence="1">Nucleus</location>
        <location evidence="1">PML body</location>
    </subcellularLocation>
    <subcellularLocation>
        <location evidence="1">Chromosome</location>
        <location evidence="1">Telomere</location>
    </subcellularLocation>
    <text evidence="1">Localizes to discrete nuclear foci after treatment with genotoxic agents. Localizes to DNA double-strand breaks (DSBs); recruited to DNA damage sites via association with phosphorylated proteins, such as phosphorylated H2AX, phosphorylated MDC1 and phosphorylated RAD17. Acetylation of 'Lys-5' of histone H2AX (H2AXK5ac) promotes NBN/NBS1 assembly at the sites of DNA damage.</text>
</comment>
<comment type="domain">
    <text evidence="1">The FHA and BRCT domains specifically recognize and bind phosphorylated proteins.</text>
</comment>
<comment type="domain">
    <text evidence="1">The C-terminal domain contains a MRE11-binding site, and this interaction is required for the nuclear localization of the MRN complex.</text>
</comment>
<comment type="domain">
    <text evidence="1">The FxF/Y motif (also named EEXXXDDL motif) is required for the interaction with ATM and its recruitment to sites of DNA damage and promote the phosphorylation of ATM substrates, leading to the events of DNA damage response.</text>
</comment>
<comment type="PTM">
    <text evidence="1">Phosphorylated by ATM in response of ionizing radiation, and such phosphorylation is responsible intra-S phase checkpoint control and telomere maintenance. Phosphorylated at Ser-432 by CDK2 in S/G2 phases abolishes interaction with TERF2, enabling DCLRE1B/Apollo recruitment to telomeres. Phosphorylation at Ser-432 in response to dysfunctional telomeres promotes non-homologous end joining repair at telomeres, while dephosphorylation by PPP1CA promotes microhomology-mediated end-joining (MMEJ) repair.</text>
</comment>
<comment type="PTM">
    <text evidence="1">Ubiquitinated at Lys-435 via 'Lys-6'-linked ubiquitin chains by RNF8, promoting NBN recruitment to DNA double-strand breaks (DSBs). Ubiquitinated at Lys-686 and Lys-689 via 'Lys-63'-linked ubiquitin chains by PELI1: ubiquitination takes place following PELI1 phosphorylation and promotes ATM activation and DNA repair. Ubiquitinated at Lys-735 via 'Lys-63'-linked ubiquitin chains by the SCF(SKP2) complex: ubiquitination takes place following SKP2 phosphorylation and promotes ATM activation and DNA repair.</text>
</comment>
<comment type="PTM">
    <text evidence="1">Lactylation at Lys-388 by KAT5 in response to DNA damage promotes recruitment of the MRN complex to DNA damage sites. Delactylated by HDAC3.</text>
</comment>
<comment type="similarity">
    <text evidence="6">Belongs to the Nibrin family.</text>
</comment>
<organism>
    <name type="scientific">Pongo abelii</name>
    <name type="common">Sumatran orangutan</name>
    <name type="synonym">Pongo pygmaeus abelii</name>
    <dbReference type="NCBI Taxonomy" id="9601"/>
    <lineage>
        <taxon>Eukaryota</taxon>
        <taxon>Metazoa</taxon>
        <taxon>Chordata</taxon>
        <taxon>Craniata</taxon>
        <taxon>Vertebrata</taxon>
        <taxon>Euteleostomi</taxon>
        <taxon>Mammalia</taxon>
        <taxon>Eutheria</taxon>
        <taxon>Euarchontoglires</taxon>
        <taxon>Primates</taxon>
        <taxon>Haplorrhini</taxon>
        <taxon>Catarrhini</taxon>
        <taxon>Hominidae</taxon>
        <taxon>Pongo</taxon>
    </lineage>
</organism>
<name>NBN_PONAB</name>
<gene>
    <name type="primary">NBN</name>
</gene>